<proteinExistence type="inferred from homology"/>
<name>PANB_SALA4</name>
<feature type="chain" id="PRO_1000097000" description="3-methyl-2-oxobutanoate hydroxymethyltransferase">
    <location>
        <begin position="1"/>
        <end position="263"/>
    </location>
</feature>
<feature type="active site" description="Proton acceptor" evidence="1">
    <location>
        <position position="180"/>
    </location>
</feature>
<feature type="binding site" evidence="1">
    <location>
        <begin position="45"/>
        <end position="46"/>
    </location>
    <ligand>
        <name>3-methyl-2-oxobutanoate</name>
        <dbReference type="ChEBI" id="CHEBI:11851"/>
    </ligand>
</feature>
<feature type="binding site" evidence="1">
    <location>
        <position position="45"/>
    </location>
    <ligand>
        <name>Mg(2+)</name>
        <dbReference type="ChEBI" id="CHEBI:18420"/>
    </ligand>
</feature>
<feature type="binding site" evidence="1">
    <location>
        <position position="84"/>
    </location>
    <ligand>
        <name>3-methyl-2-oxobutanoate</name>
        <dbReference type="ChEBI" id="CHEBI:11851"/>
    </ligand>
</feature>
<feature type="binding site" evidence="1">
    <location>
        <position position="84"/>
    </location>
    <ligand>
        <name>Mg(2+)</name>
        <dbReference type="ChEBI" id="CHEBI:18420"/>
    </ligand>
</feature>
<feature type="binding site" evidence="1">
    <location>
        <position position="112"/>
    </location>
    <ligand>
        <name>3-methyl-2-oxobutanoate</name>
        <dbReference type="ChEBI" id="CHEBI:11851"/>
    </ligand>
</feature>
<feature type="binding site" evidence="1">
    <location>
        <position position="114"/>
    </location>
    <ligand>
        <name>Mg(2+)</name>
        <dbReference type="ChEBI" id="CHEBI:18420"/>
    </ligand>
</feature>
<comment type="function">
    <text evidence="1">Catalyzes the reversible reaction in which hydroxymethyl group from 5,10-methylenetetrahydrofolate is transferred onto alpha-ketoisovalerate to form ketopantoate.</text>
</comment>
<comment type="catalytic activity">
    <reaction evidence="1">
        <text>3-methyl-2-oxobutanoate + (6R)-5,10-methylene-5,6,7,8-tetrahydrofolate + H2O = 2-dehydropantoate + (6S)-5,6,7,8-tetrahydrofolate</text>
        <dbReference type="Rhea" id="RHEA:11824"/>
        <dbReference type="ChEBI" id="CHEBI:11561"/>
        <dbReference type="ChEBI" id="CHEBI:11851"/>
        <dbReference type="ChEBI" id="CHEBI:15377"/>
        <dbReference type="ChEBI" id="CHEBI:15636"/>
        <dbReference type="ChEBI" id="CHEBI:57453"/>
        <dbReference type="EC" id="2.1.2.11"/>
    </reaction>
</comment>
<comment type="cofactor">
    <cofactor evidence="1">
        <name>Mg(2+)</name>
        <dbReference type="ChEBI" id="CHEBI:18420"/>
    </cofactor>
    <text evidence="1">Binds 1 Mg(2+) ion per subunit.</text>
</comment>
<comment type="pathway">
    <text evidence="1">Cofactor biosynthesis; (R)-pantothenate biosynthesis; (R)-pantoate from 3-methyl-2-oxobutanoate: step 1/2.</text>
</comment>
<comment type="subunit">
    <text evidence="1">Homodecamer; pentamer of dimers.</text>
</comment>
<comment type="subcellular location">
    <subcellularLocation>
        <location evidence="1">Cytoplasm</location>
    </subcellularLocation>
</comment>
<comment type="similarity">
    <text evidence="1">Belongs to the PanB family.</text>
</comment>
<protein>
    <recommendedName>
        <fullName evidence="1">3-methyl-2-oxobutanoate hydroxymethyltransferase</fullName>
        <ecNumber evidence="1">2.1.2.11</ecNumber>
    </recommendedName>
    <alternativeName>
        <fullName evidence="1">Ketopantoate hydroxymethyltransferase</fullName>
        <shortName evidence="1">KPHMT</shortName>
    </alternativeName>
</protein>
<evidence type="ECO:0000255" key="1">
    <source>
        <dbReference type="HAMAP-Rule" id="MF_00156"/>
    </source>
</evidence>
<dbReference type="EC" id="2.1.2.11" evidence="1"/>
<dbReference type="EMBL" id="CP001138">
    <property type="protein sequence ID" value="ACH49912.1"/>
    <property type="molecule type" value="Genomic_DNA"/>
</dbReference>
<dbReference type="RefSeq" id="WP_000805486.1">
    <property type="nucleotide sequence ID" value="NC_011149.1"/>
</dbReference>
<dbReference type="SMR" id="B5F833"/>
<dbReference type="KEGG" id="sea:SeAg_B0216"/>
<dbReference type="HOGENOM" id="CLU_036645_1_0_6"/>
<dbReference type="UniPathway" id="UPA00028">
    <property type="reaction ID" value="UER00003"/>
</dbReference>
<dbReference type="Proteomes" id="UP000008819">
    <property type="component" value="Chromosome"/>
</dbReference>
<dbReference type="GO" id="GO:0005737">
    <property type="term" value="C:cytoplasm"/>
    <property type="evidence" value="ECO:0007669"/>
    <property type="project" value="UniProtKB-SubCell"/>
</dbReference>
<dbReference type="GO" id="GO:0003864">
    <property type="term" value="F:3-methyl-2-oxobutanoate hydroxymethyltransferase activity"/>
    <property type="evidence" value="ECO:0007669"/>
    <property type="project" value="UniProtKB-UniRule"/>
</dbReference>
<dbReference type="GO" id="GO:0000287">
    <property type="term" value="F:magnesium ion binding"/>
    <property type="evidence" value="ECO:0007669"/>
    <property type="project" value="TreeGrafter"/>
</dbReference>
<dbReference type="GO" id="GO:0015940">
    <property type="term" value="P:pantothenate biosynthetic process"/>
    <property type="evidence" value="ECO:0007669"/>
    <property type="project" value="UniProtKB-UniRule"/>
</dbReference>
<dbReference type="CDD" id="cd06557">
    <property type="entry name" value="KPHMT-like"/>
    <property type="match status" value="1"/>
</dbReference>
<dbReference type="FunFam" id="3.20.20.60:FF:000003">
    <property type="entry name" value="3-methyl-2-oxobutanoate hydroxymethyltransferase"/>
    <property type="match status" value="1"/>
</dbReference>
<dbReference type="Gene3D" id="3.20.20.60">
    <property type="entry name" value="Phosphoenolpyruvate-binding domains"/>
    <property type="match status" value="1"/>
</dbReference>
<dbReference type="HAMAP" id="MF_00156">
    <property type="entry name" value="PanB"/>
    <property type="match status" value="1"/>
</dbReference>
<dbReference type="InterPro" id="IPR003700">
    <property type="entry name" value="Pantoate_hydroxy_MeTrfase"/>
</dbReference>
<dbReference type="InterPro" id="IPR015813">
    <property type="entry name" value="Pyrv/PenolPyrv_kinase-like_dom"/>
</dbReference>
<dbReference type="InterPro" id="IPR040442">
    <property type="entry name" value="Pyrv_kinase-like_dom_sf"/>
</dbReference>
<dbReference type="NCBIfam" id="TIGR00222">
    <property type="entry name" value="panB"/>
    <property type="match status" value="1"/>
</dbReference>
<dbReference type="NCBIfam" id="NF001452">
    <property type="entry name" value="PRK00311.1"/>
    <property type="match status" value="1"/>
</dbReference>
<dbReference type="PANTHER" id="PTHR20881">
    <property type="entry name" value="3-METHYL-2-OXOBUTANOATE HYDROXYMETHYLTRANSFERASE"/>
    <property type="match status" value="1"/>
</dbReference>
<dbReference type="PANTHER" id="PTHR20881:SF0">
    <property type="entry name" value="3-METHYL-2-OXOBUTANOATE HYDROXYMETHYLTRANSFERASE"/>
    <property type="match status" value="1"/>
</dbReference>
<dbReference type="Pfam" id="PF02548">
    <property type="entry name" value="Pantoate_transf"/>
    <property type="match status" value="1"/>
</dbReference>
<dbReference type="PIRSF" id="PIRSF000388">
    <property type="entry name" value="Pantoate_hydroxy_MeTrfase"/>
    <property type="match status" value="1"/>
</dbReference>
<dbReference type="SUPFAM" id="SSF51621">
    <property type="entry name" value="Phosphoenolpyruvate/pyruvate domain"/>
    <property type="match status" value="1"/>
</dbReference>
<gene>
    <name evidence="1" type="primary">panB</name>
    <name type="ordered locus">SeAg_B0216</name>
</gene>
<organism>
    <name type="scientific">Salmonella agona (strain SL483)</name>
    <dbReference type="NCBI Taxonomy" id="454166"/>
    <lineage>
        <taxon>Bacteria</taxon>
        <taxon>Pseudomonadati</taxon>
        <taxon>Pseudomonadota</taxon>
        <taxon>Gammaproteobacteria</taxon>
        <taxon>Enterobacterales</taxon>
        <taxon>Enterobacteriaceae</taxon>
        <taxon>Salmonella</taxon>
    </lineage>
</organism>
<accession>B5F833</accession>
<sequence length="263" mass="28166">MKPTTISLLQKCKQEKKRFATITAYDYSFAKLFADEGINVMLVGDSLGMTIQGHDSTLPVTVEDIAYHTRAVRRGAPNCLLLSDLPFMAYATPEQACENAAIVMRAGANMVKIEGGAWLVDTVKMLTERAVPVCGHLGLTPQSVNIFGGYKIQGRGDAGQMLLDDALALEAAGAQLLVLECVPVELAKRVTEALSIPVIGIGAGNVTDGQILVMHDAFGITGGHIPKFAKNFLAEAGDMRAAVRQYMAEVESGVYPGEEHSFH</sequence>
<reference key="1">
    <citation type="journal article" date="2011" name="J. Bacteriol.">
        <title>Comparative genomics of 28 Salmonella enterica isolates: evidence for CRISPR-mediated adaptive sublineage evolution.</title>
        <authorList>
            <person name="Fricke W.F."/>
            <person name="Mammel M.K."/>
            <person name="McDermott P.F."/>
            <person name="Tartera C."/>
            <person name="White D.G."/>
            <person name="Leclerc J.E."/>
            <person name="Ravel J."/>
            <person name="Cebula T.A."/>
        </authorList>
    </citation>
    <scope>NUCLEOTIDE SEQUENCE [LARGE SCALE GENOMIC DNA]</scope>
    <source>
        <strain>SL483</strain>
    </source>
</reference>
<keyword id="KW-0963">Cytoplasm</keyword>
<keyword id="KW-0460">Magnesium</keyword>
<keyword id="KW-0479">Metal-binding</keyword>
<keyword id="KW-0566">Pantothenate biosynthesis</keyword>
<keyword id="KW-0808">Transferase</keyword>